<reference key="1">
    <citation type="journal article" date="2005" name="DNA Res.">
        <title>Signal sequence and keyword trap in silico for selection of full-length human cDNAs encoding secretion or membrane proteins from oligo-capped cDNA libraries.</title>
        <authorList>
            <person name="Otsuki T."/>
            <person name="Ota T."/>
            <person name="Nishikawa T."/>
            <person name="Hayashi K."/>
            <person name="Suzuki Y."/>
            <person name="Yamamoto J."/>
            <person name="Wakamatsu A."/>
            <person name="Kimura K."/>
            <person name="Sakamoto K."/>
            <person name="Hatano N."/>
            <person name="Kawai Y."/>
            <person name="Ishii S."/>
            <person name="Saito K."/>
            <person name="Kojima S."/>
            <person name="Sugiyama T."/>
            <person name="Ono T."/>
            <person name="Okano K."/>
            <person name="Yoshikawa Y."/>
            <person name="Aotsuka S."/>
            <person name="Sasaki N."/>
            <person name="Hattori A."/>
            <person name="Okumura K."/>
            <person name="Nagai K."/>
            <person name="Sugano S."/>
            <person name="Isogai T."/>
        </authorList>
    </citation>
    <scope>NUCLEOTIDE SEQUENCE [LARGE SCALE MRNA]</scope>
    <source>
        <tissue>Placenta</tissue>
    </source>
</reference>
<reference key="2">
    <citation type="submission" date="2005-07" db="EMBL/GenBank/DDBJ databases">
        <authorList>
            <person name="Mural R.J."/>
            <person name="Istrail S."/>
            <person name="Sutton G.G."/>
            <person name="Florea L."/>
            <person name="Halpern A.L."/>
            <person name="Mobarry C.M."/>
            <person name="Lippert R."/>
            <person name="Walenz B."/>
            <person name="Shatkay H."/>
            <person name="Dew I."/>
            <person name="Miller J.R."/>
            <person name="Flanigan M.J."/>
            <person name="Edwards N.J."/>
            <person name="Bolanos R."/>
            <person name="Fasulo D."/>
            <person name="Halldorsson B.V."/>
            <person name="Hannenhalli S."/>
            <person name="Turner R."/>
            <person name="Yooseph S."/>
            <person name="Lu F."/>
            <person name="Nusskern D.R."/>
            <person name="Shue B.C."/>
            <person name="Zheng X.H."/>
            <person name="Zhong F."/>
            <person name="Delcher A.L."/>
            <person name="Huson D.H."/>
            <person name="Kravitz S.A."/>
            <person name="Mouchard L."/>
            <person name="Reinert K."/>
            <person name="Remington K.A."/>
            <person name="Clark A.G."/>
            <person name="Waterman M.S."/>
            <person name="Eichler E.E."/>
            <person name="Adams M.D."/>
            <person name="Hunkapiller M.W."/>
            <person name="Myers E.W."/>
            <person name="Venter J.C."/>
        </authorList>
    </citation>
    <scope>NUCLEOTIDE SEQUENCE [LARGE SCALE GENOMIC DNA]</scope>
</reference>
<reference key="3">
    <citation type="journal article" date="2004" name="Genome Res.">
        <title>The status, quality, and expansion of the NIH full-length cDNA project: the Mammalian Gene Collection (MGC).</title>
        <authorList>
            <consortium name="The MGC Project Team"/>
        </authorList>
    </citation>
    <scope>NUCLEOTIDE SEQUENCE [LARGE SCALE MRNA]</scope>
    <source>
        <tissue>Pancreas</tissue>
    </source>
</reference>
<reference key="4">
    <citation type="journal article" date="2006" name="Biochem. Biophys. Res. Commun.">
        <title>Identification of RELT homologues that associate with RELT and are phosphorylated by OSR1.</title>
        <authorList>
            <person name="Cusick J.K."/>
            <person name="Xu L.-G."/>
            <person name="Bin L.-H."/>
            <person name="Han K.-J."/>
            <person name="Shu H.-B."/>
        </authorList>
    </citation>
    <scope>SUBCELLULAR LOCATION</scope>
    <scope>TISSUE SPECIFICITY</scope>
    <scope>INTERACTION WITH RELT; RELL2 AND OXSR1</scope>
    <scope>PHOSPHORYLATION</scope>
</reference>
<reference key="5">
    <citation type="journal article" date="2008" name="Proc. Natl. Acad. Sci. U.S.A.">
        <title>A quantitative atlas of mitotic phosphorylation.</title>
        <authorList>
            <person name="Dephoure N."/>
            <person name="Zhou C."/>
            <person name="Villen J."/>
            <person name="Beausoleil S.A."/>
            <person name="Bakalarski C.E."/>
            <person name="Elledge S.J."/>
            <person name="Gygi S.P."/>
        </authorList>
    </citation>
    <scope>PHOSPHORYLATION [LARGE SCALE ANALYSIS] AT SER-244 AND SER-247</scope>
    <scope>IDENTIFICATION BY MASS SPECTROMETRY [LARGE SCALE ANALYSIS]</scope>
    <source>
        <tissue>Cervix carcinoma</tissue>
    </source>
</reference>
<reference key="6">
    <citation type="journal article" date="2010" name="Cell. Immunol.">
        <title>RELT induces cellular death in HEK 293 epithelial cells.</title>
        <authorList>
            <person name="Cusick J.K."/>
            <person name="Mustian A."/>
            <person name="Goldberg K."/>
            <person name="Reyland M.E."/>
        </authorList>
    </citation>
    <scope>FUNCTION</scope>
</reference>
<reference key="7">
    <citation type="journal article" date="2010" name="Sci. Signal.">
        <title>Quantitative phosphoproteomics reveals widespread full phosphorylation site occupancy during mitosis.</title>
        <authorList>
            <person name="Olsen J.V."/>
            <person name="Vermeulen M."/>
            <person name="Santamaria A."/>
            <person name="Kumar C."/>
            <person name="Miller M.L."/>
            <person name="Jensen L.J."/>
            <person name="Gnad F."/>
            <person name="Cox J."/>
            <person name="Jensen T.S."/>
            <person name="Nigg E.A."/>
            <person name="Brunak S."/>
            <person name="Mann M."/>
        </authorList>
    </citation>
    <scope>PHOSPHORYLATION [LARGE SCALE ANALYSIS] AT SER-109 AND SER-114</scope>
    <scope>IDENTIFICATION BY MASS SPECTROMETRY [LARGE SCALE ANALYSIS]</scope>
    <source>
        <tissue>Cervix carcinoma</tissue>
    </source>
</reference>
<reference key="8">
    <citation type="journal article" date="2012" name="Mol. Cell. Biochem.">
        <title>Identification of PLSCR1 as a protein that interacts with RELT family members.</title>
        <authorList>
            <person name="Cusick J.K."/>
            <person name="Mustian A."/>
            <person name="Jacobs A.T."/>
            <person name="Reyland M.E."/>
        </authorList>
    </citation>
    <scope>INTERACTION WITH PLSCR1</scope>
</reference>
<reference key="9">
    <citation type="journal article" date="2017" name="Biochem. Biophys. Res. Commun.">
        <title>RELT family members activate p38 and induce apoptosis by a mechanism distinct from TNFR1.</title>
        <authorList>
            <person name="Moua P."/>
            <person name="Checketts M."/>
            <person name="Xu L.G."/>
            <person name="Shu H.B."/>
            <person name="Reyland M.E."/>
            <person name="Cusick J.K."/>
        </authorList>
    </citation>
    <scope>FUNCTION</scope>
</reference>
<dbReference type="EMBL" id="AK075468">
    <property type="protein sequence ID" value="BAC11638.1"/>
    <property type="molecule type" value="mRNA"/>
</dbReference>
<dbReference type="EMBL" id="CH471069">
    <property type="protein sequence ID" value="EAW92885.1"/>
    <property type="molecule type" value="Genomic_DNA"/>
</dbReference>
<dbReference type="EMBL" id="BC039540">
    <property type="protein sequence ID" value="AAH39540.1"/>
    <property type="molecule type" value="mRNA"/>
</dbReference>
<dbReference type="CCDS" id="CCDS43221.1"/>
<dbReference type="RefSeq" id="NP_001078868.1">
    <property type="nucleotide sequence ID" value="NM_001085399.2"/>
</dbReference>
<dbReference type="RefSeq" id="NP_001078869.1">
    <property type="nucleotide sequence ID" value="NM_001085400.2"/>
</dbReference>
<dbReference type="BioGRID" id="612841">
    <property type="interactions" value="83"/>
</dbReference>
<dbReference type="FunCoup" id="Q8IUW5">
    <property type="interactions" value="446"/>
</dbReference>
<dbReference type="IntAct" id="Q8IUW5">
    <property type="interactions" value="32"/>
</dbReference>
<dbReference type="MINT" id="Q8IUW5"/>
<dbReference type="STRING" id="9606.ENSP00000398778"/>
<dbReference type="GlyCosmos" id="Q8IUW5">
    <property type="glycosylation" value="2 sites, No reported glycans"/>
</dbReference>
<dbReference type="GlyGen" id="Q8IUW5">
    <property type="glycosylation" value="6 sites, 1 O-linked glycan (1 site)"/>
</dbReference>
<dbReference type="iPTMnet" id="Q8IUW5"/>
<dbReference type="PhosphoSitePlus" id="Q8IUW5"/>
<dbReference type="SwissPalm" id="Q8IUW5"/>
<dbReference type="BioMuta" id="RELL1"/>
<dbReference type="DMDM" id="74727997"/>
<dbReference type="jPOST" id="Q8IUW5"/>
<dbReference type="MassIVE" id="Q8IUW5"/>
<dbReference type="PaxDb" id="9606-ENSP00000398778"/>
<dbReference type="PeptideAtlas" id="Q8IUW5"/>
<dbReference type="ProteomicsDB" id="70617"/>
<dbReference type="Pumba" id="Q8IUW5"/>
<dbReference type="Antibodypedia" id="2874">
    <property type="antibodies" value="12 antibodies from 7 providers"/>
</dbReference>
<dbReference type="DNASU" id="768211"/>
<dbReference type="Ensembl" id="ENST00000314117.8">
    <property type="protein sequence ID" value="ENSP00000313385.4"/>
    <property type="gene ID" value="ENSG00000181826.10"/>
</dbReference>
<dbReference type="Ensembl" id="ENST00000454158.7">
    <property type="protein sequence ID" value="ENSP00000398778.2"/>
    <property type="gene ID" value="ENSG00000181826.10"/>
</dbReference>
<dbReference type="GeneID" id="768211"/>
<dbReference type="KEGG" id="hsa:768211"/>
<dbReference type="MANE-Select" id="ENST00000454158.7">
    <property type="protein sequence ID" value="ENSP00000398778.2"/>
    <property type="RefSeq nucleotide sequence ID" value="NM_001085400.2"/>
    <property type="RefSeq protein sequence ID" value="NP_001078869.1"/>
</dbReference>
<dbReference type="UCSC" id="uc003gsz.3">
    <property type="organism name" value="human"/>
</dbReference>
<dbReference type="AGR" id="HGNC:27379"/>
<dbReference type="CTD" id="768211"/>
<dbReference type="DisGeNET" id="768211"/>
<dbReference type="GeneCards" id="RELL1"/>
<dbReference type="HGNC" id="HGNC:27379">
    <property type="gene designation" value="RELL1"/>
</dbReference>
<dbReference type="HPA" id="ENSG00000181826">
    <property type="expression patterns" value="Low tissue specificity"/>
</dbReference>
<dbReference type="MIM" id="611212">
    <property type="type" value="gene"/>
</dbReference>
<dbReference type="neXtProt" id="NX_Q8IUW5"/>
<dbReference type="OpenTargets" id="ENSG00000181826"/>
<dbReference type="PharmGKB" id="PA162401054"/>
<dbReference type="VEuPathDB" id="HostDB:ENSG00000181826"/>
<dbReference type="eggNOG" id="ENOG502R0TD">
    <property type="taxonomic scope" value="Eukaryota"/>
</dbReference>
<dbReference type="GeneTree" id="ENSGT00940000159709"/>
<dbReference type="HOGENOM" id="CLU_084225_0_0_1"/>
<dbReference type="InParanoid" id="Q8IUW5"/>
<dbReference type="OMA" id="NICTRCS"/>
<dbReference type="OrthoDB" id="9353106at2759"/>
<dbReference type="PAN-GO" id="Q8IUW5">
    <property type="GO annotations" value="2 GO annotations based on evolutionary models"/>
</dbReference>
<dbReference type="PhylomeDB" id="Q8IUW5"/>
<dbReference type="TreeFam" id="TF332339"/>
<dbReference type="PathwayCommons" id="Q8IUW5"/>
<dbReference type="SignaLink" id="Q8IUW5"/>
<dbReference type="BioGRID-ORCS" id="768211">
    <property type="hits" value="8 hits in 1155 CRISPR screens"/>
</dbReference>
<dbReference type="ChiTaRS" id="RELL1">
    <property type="organism name" value="human"/>
</dbReference>
<dbReference type="GenomeRNAi" id="768211"/>
<dbReference type="Pharos" id="Q8IUW5">
    <property type="development level" value="Tbio"/>
</dbReference>
<dbReference type="PRO" id="PR:Q8IUW5"/>
<dbReference type="Proteomes" id="UP000005640">
    <property type="component" value="Chromosome 4"/>
</dbReference>
<dbReference type="RNAct" id="Q8IUW5">
    <property type="molecule type" value="protein"/>
</dbReference>
<dbReference type="Bgee" id="ENSG00000181826">
    <property type="expression patterns" value="Expressed in germinal epithelium of ovary and 196 other cell types or tissues"/>
</dbReference>
<dbReference type="ExpressionAtlas" id="Q8IUW5">
    <property type="expression patterns" value="baseline and differential"/>
</dbReference>
<dbReference type="GO" id="GO:0015630">
    <property type="term" value="C:microtubule cytoskeleton"/>
    <property type="evidence" value="ECO:0000314"/>
    <property type="project" value="HPA"/>
</dbReference>
<dbReference type="GO" id="GO:0005886">
    <property type="term" value="C:plasma membrane"/>
    <property type="evidence" value="ECO:0000314"/>
    <property type="project" value="HPA"/>
</dbReference>
<dbReference type="GO" id="GO:1900745">
    <property type="term" value="P:positive regulation of p38MAPK cascade"/>
    <property type="evidence" value="ECO:0000314"/>
    <property type="project" value="UniProtKB"/>
</dbReference>
<dbReference type="InterPro" id="IPR042315">
    <property type="entry name" value="RELL1"/>
</dbReference>
<dbReference type="InterPro" id="IPR022248">
    <property type="entry name" value="TNF_rcpt_RELT"/>
</dbReference>
<dbReference type="PANTHER" id="PTHR31037:SF1">
    <property type="entry name" value="RELT-LIKE PROTEIN 1"/>
    <property type="match status" value="1"/>
</dbReference>
<dbReference type="PANTHER" id="PTHR31037">
    <property type="entry name" value="RELT-LIKE PROTEIN 1-RELATED"/>
    <property type="match status" value="1"/>
</dbReference>
<dbReference type="Pfam" id="PF12606">
    <property type="entry name" value="RELT"/>
    <property type="match status" value="1"/>
</dbReference>
<keyword id="KW-1003">Cell membrane</keyword>
<keyword id="KW-0175">Coiled coil</keyword>
<keyword id="KW-0325">Glycoprotein</keyword>
<keyword id="KW-0472">Membrane</keyword>
<keyword id="KW-0597">Phosphoprotein</keyword>
<keyword id="KW-1267">Proteomics identification</keyword>
<keyword id="KW-1185">Reference proteome</keyword>
<keyword id="KW-0732">Signal</keyword>
<keyword id="KW-0812">Transmembrane</keyword>
<keyword id="KW-1133">Transmembrane helix</keyword>
<accession>Q8IUW5</accession>
<accession>Q8NBK1</accession>
<feature type="signal peptide" evidence="1">
    <location>
        <begin position="1"/>
        <end position="23"/>
    </location>
</feature>
<feature type="chain" id="PRO_0000323590" description="RELT-like protein 1">
    <location>
        <begin position="24"/>
        <end position="271"/>
    </location>
</feature>
<feature type="topological domain" description="Extracellular" evidence="1">
    <location>
        <begin position="24"/>
        <end position="57"/>
    </location>
</feature>
<feature type="transmembrane region" description="Helical" evidence="1">
    <location>
        <begin position="58"/>
        <end position="78"/>
    </location>
</feature>
<feature type="topological domain" description="Cytoplasmic" evidence="1">
    <location>
        <begin position="79"/>
        <end position="271"/>
    </location>
</feature>
<feature type="region of interest" description="Disordered" evidence="2">
    <location>
        <begin position="28"/>
        <end position="53"/>
    </location>
</feature>
<feature type="region of interest" description="Disordered" evidence="2">
    <location>
        <begin position="145"/>
        <end position="173"/>
    </location>
</feature>
<feature type="region of interest" description="Disordered" evidence="2">
    <location>
        <begin position="233"/>
        <end position="271"/>
    </location>
</feature>
<feature type="coiled-coil region" evidence="1">
    <location>
        <begin position="89"/>
        <end position="113"/>
    </location>
</feature>
<feature type="compositionally biased region" description="Polar residues" evidence="2">
    <location>
        <begin position="31"/>
        <end position="52"/>
    </location>
</feature>
<feature type="compositionally biased region" description="Pro residues" evidence="2">
    <location>
        <begin position="155"/>
        <end position="165"/>
    </location>
</feature>
<feature type="compositionally biased region" description="Basic and acidic residues" evidence="2">
    <location>
        <begin position="233"/>
        <end position="244"/>
    </location>
</feature>
<feature type="modified residue" description="Phosphoserine" evidence="9">
    <location>
        <position position="109"/>
    </location>
</feature>
<feature type="modified residue" description="Phosphoserine" evidence="9">
    <location>
        <position position="114"/>
    </location>
</feature>
<feature type="modified residue" description="Phosphoserine" evidence="8">
    <location>
        <position position="244"/>
    </location>
</feature>
<feature type="modified residue" description="Phosphoserine" evidence="8">
    <location>
        <position position="247"/>
    </location>
</feature>
<feature type="glycosylation site" description="N-linked (GlcNAc...) asparagine" evidence="1">
    <location>
        <position position="31"/>
    </location>
</feature>
<feature type="glycosylation site" description="N-linked (GlcNAc...) asparagine" evidence="1">
    <location>
        <position position="49"/>
    </location>
</feature>
<feature type="sequence conflict" description="In Ref. 1; BAC11638." evidence="7" ref="1">
    <original>T</original>
    <variation>A</variation>
    <location>
        <position position="36"/>
    </location>
</feature>
<proteinExistence type="evidence at protein level"/>
<protein>
    <recommendedName>
        <fullName>RELT-like protein 1</fullName>
    </recommendedName>
</protein>
<name>RELL1_HUMAN</name>
<gene>
    <name type="primary">RELL1</name>
    <name type="ORF">PSEC0162</name>
</gene>
<sequence>MAPRALPGSAVLAAAVFVGGAVSSPLVAPDNGSSRTLHSRTETTPSPSNDTGNGHPEYIAYALVPVFFIMGLFGVLICHLLKKKGYRCTTEAEQDIEEEKVEKIELNDSVNENSDTVGQIVHYIMKNEANADVLKAMVADNSLYDPESPVTPSTPGSPPVSPGPLSPGGTPGKHVCGHHLHTVGGVVERDVCHRCRHKRWHFIKPTNKSRESRPRRQGEVTVLSVGRFRVTKVEHKSNQKERRSLMSVSGAETVNGEVPATPVKRERSGTE</sequence>
<evidence type="ECO:0000255" key="1"/>
<evidence type="ECO:0000256" key="2">
    <source>
        <dbReference type="SAM" id="MobiDB-lite"/>
    </source>
</evidence>
<evidence type="ECO:0000269" key="3">
    <source>
    </source>
</evidence>
<evidence type="ECO:0000269" key="4">
    <source>
    </source>
</evidence>
<evidence type="ECO:0000269" key="5">
    <source>
    </source>
</evidence>
<evidence type="ECO:0000269" key="6">
    <source>
    </source>
</evidence>
<evidence type="ECO:0000305" key="7"/>
<evidence type="ECO:0007744" key="8">
    <source>
    </source>
</evidence>
<evidence type="ECO:0007744" key="9">
    <source>
    </source>
</evidence>
<organism>
    <name type="scientific">Homo sapiens</name>
    <name type="common">Human</name>
    <dbReference type="NCBI Taxonomy" id="9606"/>
    <lineage>
        <taxon>Eukaryota</taxon>
        <taxon>Metazoa</taxon>
        <taxon>Chordata</taxon>
        <taxon>Craniata</taxon>
        <taxon>Vertebrata</taxon>
        <taxon>Euteleostomi</taxon>
        <taxon>Mammalia</taxon>
        <taxon>Eutheria</taxon>
        <taxon>Euarchontoglires</taxon>
        <taxon>Primates</taxon>
        <taxon>Haplorrhini</taxon>
        <taxon>Catarrhini</taxon>
        <taxon>Hominidae</taxon>
        <taxon>Homo</taxon>
    </lineage>
</organism>
<comment type="function">
    <text evidence="4 6">Induces activation of MAPK14/p38 cascade, when overexpressed (PubMed:28688764). Induces apoptosis, when overexpressed (PubMed:19969290).</text>
</comment>
<comment type="subunit">
    <text evidence="3 5">Interacts with RELT, RELL2 and OXSR1 (PubMed:16389068). Interacts with PLSCR1 (PubMed:22052202).</text>
</comment>
<comment type="interaction">
    <interactant intactId="EBI-11343385">
        <id>Q8IUW5</id>
    </interactant>
    <interactant intactId="EBI-16746122">
        <id>Q9NSU2-1</id>
        <label>TREX1</label>
    </interactant>
    <organismsDiffer>false</organismsDiffer>
    <experiments>3</experiments>
</comment>
<comment type="subcellular location">
    <subcellularLocation>
        <location evidence="3">Cell membrane</location>
        <topology evidence="3">Single-pass type I membrane protein</topology>
    </subcellularLocation>
</comment>
<comment type="tissue specificity">
    <text evidence="3">Widely expressed. Expressed at highest levels in the placenta, skeletal muscle, spleen and testis.</text>
</comment>
<comment type="PTM">
    <text evidence="3">Phosphorylated in vitro by OXSR1.</text>
</comment>
<comment type="similarity">
    <text evidence="7">Belongs to the RELT family.</text>
</comment>